<feature type="chain" id="PRO_0000456497" description="Large ribosomal subunit protein eL43">
    <location>
        <begin position="1"/>
        <end position="92"/>
    </location>
</feature>
<feature type="binding site" evidence="1 5">
    <location>
        <position position="39"/>
    </location>
    <ligand>
        <name>Zn(2+)</name>
        <dbReference type="ChEBI" id="CHEBI:29105"/>
        <label>101</label>
    </ligand>
</feature>
<feature type="binding site" evidence="1 5">
    <location>
        <position position="42"/>
    </location>
    <ligand>
        <name>Zn(2+)</name>
        <dbReference type="ChEBI" id="CHEBI:29105"/>
        <label>101</label>
    </ligand>
</feature>
<feature type="binding site" evidence="1 5">
    <location>
        <position position="57"/>
    </location>
    <ligand>
        <name>Zn(2+)</name>
        <dbReference type="ChEBI" id="CHEBI:29105"/>
        <label>101</label>
    </ligand>
</feature>
<feature type="binding site" evidence="1 5">
    <location>
        <position position="60"/>
    </location>
    <ligand>
        <name>Zn(2+)</name>
        <dbReference type="ChEBI" id="CHEBI:29105"/>
        <label>101</label>
    </ligand>
</feature>
<gene>
    <name evidence="2" type="primary">RPL43A</name>
    <name type="ordered locus">orf19.3942.1</name>
    <name type="ORF">CAALFM_C504590CA</name>
</gene>
<keyword id="KW-0002">3D-structure</keyword>
<keyword id="KW-0963">Cytoplasm</keyword>
<keyword id="KW-1185">Reference proteome</keyword>
<keyword id="KW-0687">Ribonucleoprotein</keyword>
<keyword id="KW-0689">Ribosomal protein</keyword>
<keyword id="KW-0862">Zinc</keyword>
<name>RL43A_CANAL</name>
<sequence length="92" mass="10115">MTKRTKKVGITGKFGVRYGSSLRRQTKKLEVQQHAKYDCSFCGKRTVQRGATGIWNCKSCKKTVAGGAYTVSTAAAATVRSTIRRLRELAEA</sequence>
<dbReference type="EMBL" id="CP017627">
    <property type="protein sequence ID" value="AOW29865.1"/>
    <property type="molecule type" value="Genomic_DNA"/>
</dbReference>
<dbReference type="RefSeq" id="XP_019330980.1">
    <property type="nucleotide sequence ID" value="XM_019475435.1"/>
</dbReference>
<dbReference type="PDB" id="7PZY">
    <property type="method" value="EM"/>
    <property type="resolution" value="2.32 A"/>
    <property type="chains" value="AQ=1-92"/>
</dbReference>
<dbReference type="PDB" id="7Q08">
    <property type="method" value="EM"/>
    <property type="resolution" value="2.56 A"/>
    <property type="chains" value="AQ=1-92"/>
</dbReference>
<dbReference type="PDB" id="7Q0F">
    <property type="method" value="EM"/>
    <property type="resolution" value="2.64 A"/>
    <property type="chains" value="AQ=1-92"/>
</dbReference>
<dbReference type="PDB" id="7Q0P">
    <property type="method" value="EM"/>
    <property type="resolution" value="2.77 A"/>
    <property type="chains" value="AQ=1-92"/>
</dbReference>
<dbReference type="PDB" id="7Q0R">
    <property type="method" value="EM"/>
    <property type="resolution" value="2.67 A"/>
    <property type="chains" value="AQ=1-92"/>
</dbReference>
<dbReference type="PDB" id="8C3A">
    <property type="method" value="X-ray"/>
    <property type="resolution" value="3.00 A"/>
    <property type="chains" value="AQ/CK=1-92"/>
</dbReference>
<dbReference type="PDB" id="8CQ7">
    <property type="method" value="X-ray"/>
    <property type="resolution" value="3.20 A"/>
    <property type="chains" value="AQ/CK=1-92"/>
</dbReference>
<dbReference type="PDB" id="8CQW">
    <property type="method" value="X-ray"/>
    <property type="resolution" value="3.05 A"/>
    <property type="chains" value="AQ/CK=1-92"/>
</dbReference>
<dbReference type="PDB" id="8CRE">
    <property type="method" value="X-ray"/>
    <property type="resolution" value="3.00 A"/>
    <property type="chains" value="AQ/CK=1-92"/>
</dbReference>
<dbReference type="PDB" id="8OEQ">
    <property type="method" value="X-ray"/>
    <property type="resolution" value="3.30 A"/>
    <property type="chains" value="AQ/CK=1-92"/>
</dbReference>
<dbReference type="PDB" id="8OGJ">
    <property type="method" value="EM"/>
    <property type="resolution" value="3.10 A"/>
    <property type="chains" value="AQ=1-92"/>
</dbReference>
<dbReference type="PDB" id="8OH6">
    <property type="method" value="X-ray"/>
    <property type="resolution" value="3.35 A"/>
    <property type="chains" value="AQ/CK=1-92"/>
</dbReference>
<dbReference type="PDB" id="8OI5">
    <property type="method" value="X-ray"/>
    <property type="resolution" value="2.90 A"/>
    <property type="chains" value="AQ/CK=1-92"/>
</dbReference>
<dbReference type="PDB" id="8OJ3">
    <property type="method" value="X-ray"/>
    <property type="resolution" value="3.50 A"/>
    <property type="chains" value="AQ/CK=1-92"/>
</dbReference>
<dbReference type="PDB" id="8Q5I">
    <property type="method" value="EM"/>
    <property type="resolution" value="2.45 A"/>
    <property type="chains" value="AQ=1-92"/>
</dbReference>
<dbReference type="PDBsum" id="7PZY"/>
<dbReference type="PDBsum" id="7Q08"/>
<dbReference type="PDBsum" id="7Q0F"/>
<dbReference type="PDBsum" id="7Q0P"/>
<dbReference type="PDBsum" id="7Q0R"/>
<dbReference type="PDBsum" id="8C3A"/>
<dbReference type="PDBsum" id="8CQ7"/>
<dbReference type="PDBsum" id="8CQW"/>
<dbReference type="PDBsum" id="8CRE"/>
<dbReference type="PDBsum" id="8OEQ"/>
<dbReference type="PDBsum" id="8OGJ"/>
<dbReference type="PDBsum" id="8OH6"/>
<dbReference type="PDBsum" id="8OI5"/>
<dbReference type="PDBsum" id="8OJ3"/>
<dbReference type="PDBsum" id="8Q5I"/>
<dbReference type="EMDB" id="EMD-16874"/>
<dbReference type="SMR" id="A0A1D8PP14"/>
<dbReference type="FunCoup" id="A0A1D8PP14">
    <property type="interactions" value="1077"/>
</dbReference>
<dbReference type="STRING" id="237561.A0A1D8PP14"/>
<dbReference type="EnsemblFungi" id="C5_04590C_A-T">
    <property type="protein sequence ID" value="C5_04590C_A-T-p1"/>
    <property type="gene ID" value="C5_04590C_A"/>
</dbReference>
<dbReference type="GeneID" id="30515319"/>
<dbReference type="KEGG" id="cal:CAALFM_C504590CA"/>
<dbReference type="CGD" id="CAL0000185522">
    <property type="gene designation" value="RPL43A"/>
</dbReference>
<dbReference type="VEuPathDB" id="FungiDB:C5_04590C_A"/>
<dbReference type="InParanoid" id="A0A1D8PP14"/>
<dbReference type="OMA" id="GPRYGRK"/>
<dbReference type="OrthoDB" id="10258345at2759"/>
<dbReference type="Proteomes" id="UP000000559">
    <property type="component" value="Chromosome 5"/>
</dbReference>
<dbReference type="GO" id="GO:0022625">
    <property type="term" value="C:cytosolic large ribosomal subunit"/>
    <property type="evidence" value="ECO:0000318"/>
    <property type="project" value="GO_Central"/>
</dbReference>
<dbReference type="GO" id="GO:0003735">
    <property type="term" value="F:structural constituent of ribosome"/>
    <property type="evidence" value="ECO:0007669"/>
    <property type="project" value="InterPro"/>
</dbReference>
<dbReference type="GO" id="GO:0006412">
    <property type="term" value="P:translation"/>
    <property type="evidence" value="ECO:0007669"/>
    <property type="project" value="InterPro"/>
</dbReference>
<dbReference type="FunFam" id="2.20.25.30:FF:000002">
    <property type="entry name" value="60S ribosomal protein L37a"/>
    <property type="match status" value="1"/>
</dbReference>
<dbReference type="Gene3D" id="2.20.25.30">
    <property type="match status" value="1"/>
</dbReference>
<dbReference type="HAMAP" id="MF_00327">
    <property type="entry name" value="Ribosomal_eL43"/>
    <property type="match status" value="1"/>
</dbReference>
<dbReference type="InterPro" id="IPR011331">
    <property type="entry name" value="Ribosomal_eL37/eL43"/>
</dbReference>
<dbReference type="InterPro" id="IPR002674">
    <property type="entry name" value="Ribosomal_eL43"/>
</dbReference>
<dbReference type="InterPro" id="IPR050522">
    <property type="entry name" value="Ribosomal_protein_eL43"/>
</dbReference>
<dbReference type="InterPro" id="IPR011332">
    <property type="entry name" value="Ribosomal_zn-bd"/>
</dbReference>
<dbReference type="NCBIfam" id="TIGR00280">
    <property type="entry name" value="eL43_euk_arch"/>
    <property type="match status" value="1"/>
</dbReference>
<dbReference type="NCBIfam" id="NF003058">
    <property type="entry name" value="PRK03976.1"/>
    <property type="match status" value="1"/>
</dbReference>
<dbReference type="PANTHER" id="PTHR48129">
    <property type="entry name" value="60S RIBOSOMAL PROTEIN L37A"/>
    <property type="match status" value="1"/>
</dbReference>
<dbReference type="PANTHER" id="PTHR48129:SF1">
    <property type="entry name" value="LARGE RIBOSOMAL SUBUNIT PROTEIN EL43"/>
    <property type="match status" value="1"/>
</dbReference>
<dbReference type="Pfam" id="PF01780">
    <property type="entry name" value="Ribosomal_L37ae"/>
    <property type="match status" value="1"/>
</dbReference>
<dbReference type="SUPFAM" id="SSF57829">
    <property type="entry name" value="Zn-binding ribosomal proteins"/>
    <property type="match status" value="1"/>
</dbReference>
<accession>A0A1D8PP14</accession>
<comment type="function">
    <text evidence="4">Component of the ribosome, a large ribonucleoprotein complex responsible for the synthesis of proteins in the cell. The small ribosomal subunit (SSU) binds messenger RNAs (mRNAs) and translates the encoded message by selecting cognate aminoacyl-transfer RNA (tRNA) molecules. The large subunit (LSU) contains the ribosomal catalytic site termed the peptidyl transferase center (PTC), which catalyzes the formation of peptide bonds, thereby polymerizing the amino acids delivered by tRNAs into a polypeptide chain. The nascent polypeptides leave the ribosome through a tunnel in the LSU and interact with protein factors that function in enzymatic processing, targeting, and the membrane insertion of nascent chains at the exit of the ribosomal tunnel.</text>
</comment>
<comment type="cofactor">
    <cofactor evidence="1">
        <name>Zn(2+)</name>
        <dbReference type="ChEBI" id="CHEBI:29105"/>
    </cofactor>
</comment>
<comment type="subunit">
    <text evidence="1">Component of the large ribosomal subunit (PubMed:35613268). Mature ribosomes consist of a small (40S) and a large (60S) subunit (PubMed:35613268). The 40S subunit contains 32 different proteins and 1 molecule of RNA (18S) (PubMed:35613268). The 60S subunit contains 45 different proteins and 3 molecules of RNA (25S, 5.8S and 5S) (PubMed:35613268).</text>
</comment>
<comment type="subcellular location">
    <subcellularLocation>
        <location evidence="4">Cytoplasm</location>
    </subcellularLocation>
</comment>
<comment type="similarity">
    <text evidence="3">Belongs to the eukaryotic ribosomal protein eL43 family.</text>
</comment>
<organism>
    <name type="scientific">Candida albicans (strain SC5314 / ATCC MYA-2876)</name>
    <name type="common">Yeast</name>
    <dbReference type="NCBI Taxonomy" id="237561"/>
    <lineage>
        <taxon>Eukaryota</taxon>
        <taxon>Fungi</taxon>
        <taxon>Dikarya</taxon>
        <taxon>Ascomycota</taxon>
        <taxon>Saccharomycotina</taxon>
        <taxon>Pichiomycetes</taxon>
        <taxon>Debaryomycetaceae</taxon>
        <taxon>Candida/Lodderomyces clade</taxon>
        <taxon>Candida</taxon>
    </lineage>
</organism>
<proteinExistence type="evidence at protein level"/>
<reference key="1">
    <citation type="journal article" date="2004" name="Proc. Natl. Acad. Sci. U.S.A.">
        <title>The diploid genome sequence of Candida albicans.</title>
        <authorList>
            <person name="Jones T."/>
            <person name="Federspiel N.A."/>
            <person name="Chibana H."/>
            <person name="Dungan J."/>
            <person name="Kalman S."/>
            <person name="Magee B.B."/>
            <person name="Newport G."/>
            <person name="Thorstenson Y.R."/>
            <person name="Agabian N."/>
            <person name="Magee P.T."/>
            <person name="Davis R.W."/>
            <person name="Scherer S."/>
        </authorList>
    </citation>
    <scope>NUCLEOTIDE SEQUENCE [LARGE SCALE GENOMIC DNA]</scope>
    <source>
        <strain>SC5314 / ATCC MYA-2876</strain>
    </source>
</reference>
<reference key="2">
    <citation type="journal article" date="2007" name="Genome Biol.">
        <title>Assembly of the Candida albicans genome into sixteen supercontigs aligned on the eight chromosomes.</title>
        <authorList>
            <person name="van het Hoog M."/>
            <person name="Rast T.J."/>
            <person name="Martchenko M."/>
            <person name="Grindle S."/>
            <person name="Dignard D."/>
            <person name="Hogues H."/>
            <person name="Cuomo C."/>
            <person name="Berriman M."/>
            <person name="Scherer S."/>
            <person name="Magee B.B."/>
            <person name="Whiteway M."/>
            <person name="Chibana H."/>
            <person name="Nantel A."/>
            <person name="Magee P.T."/>
        </authorList>
    </citation>
    <scope>GENOME REANNOTATION</scope>
    <source>
        <strain>SC5314 / ATCC MYA-2876</strain>
    </source>
</reference>
<reference key="3">
    <citation type="journal article" date="2013" name="Genome Biol.">
        <title>Assembly of a phased diploid Candida albicans genome facilitates allele-specific measurements and provides a simple model for repeat and indel structure.</title>
        <authorList>
            <person name="Muzzey D."/>
            <person name="Schwartz K."/>
            <person name="Weissman J.S."/>
            <person name="Sherlock G."/>
        </authorList>
    </citation>
    <scope>NUCLEOTIDE SEQUENCE [LARGE SCALE GENOMIC DNA]</scope>
    <scope>GENOME REANNOTATION</scope>
    <source>
        <strain>SC5314 / ATCC MYA-2876</strain>
    </source>
</reference>
<reference evidence="5 6 7" key="4">
    <citation type="journal article" date="2022" name="Sci. Adv.">
        <title>E-site drug specificity of the human pathogen Candida albicans ribosome.</title>
        <authorList>
            <person name="Zgadzay Y."/>
            <person name="Kolosova O."/>
            <person name="Stetsenko A."/>
            <person name="Wu C."/>
            <person name="Bruchlen D."/>
            <person name="Usachev K."/>
            <person name="Validov S."/>
            <person name="Jenner L."/>
            <person name="Rogachev A."/>
            <person name="Yusupova G."/>
            <person name="Sachs M.S."/>
            <person name="Guskov A."/>
            <person name="Yusupov M."/>
        </authorList>
    </citation>
    <scope>STRUCTURE BY ELECTRON MICROSCOPY (2.32 ANGSTROMS) OF THE 80S RIBOSOME</scope>
    <scope>SUBUNIT</scope>
    <scope>COFACTOR</scope>
</reference>
<evidence type="ECO:0000269" key="1">
    <source>
    </source>
</evidence>
<evidence type="ECO:0000303" key="2">
    <source>
    </source>
</evidence>
<evidence type="ECO:0000305" key="3"/>
<evidence type="ECO:0000305" key="4">
    <source>
    </source>
</evidence>
<evidence type="ECO:0007744" key="5">
    <source>
        <dbReference type="PDB" id="7PZY"/>
    </source>
</evidence>
<evidence type="ECO:0007744" key="6">
    <source>
        <dbReference type="PDB" id="7Q0F"/>
    </source>
</evidence>
<evidence type="ECO:0007744" key="7">
    <source>
        <dbReference type="PDB" id="7Q0P"/>
    </source>
</evidence>
<protein>
    <recommendedName>
        <fullName evidence="2">Large ribosomal subunit protein eL43</fullName>
    </recommendedName>
    <alternativeName>
        <fullName>60S ribosomal protein L43-A</fullName>
    </alternativeName>
</protein>